<comment type="function">
    <text evidence="2">May constitute a glutathione peroxidase-like protective system against peroxide damage in sperm membrane lipids. Since the purified porcine enzyme has very little activity towards hydrogen peroxide or organic hydroperoxides the protective effect is not likely to be exerted by its enzymatic activity. Instead, may protect sperm from premature acrosome reaction in the epididymis by binding to lipid peroxides, which might otherwise interact with phospholipase A2 and induce the acrosome reaction.</text>
</comment>
<comment type="catalytic activity">
    <reaction>
        <text>2 glutathione + H2O2 = glutathione disulfide + 2 H2O</text>
        <dbReference type="Rhea" id="RHEA:16833"/>
        <dbReference type="ChEBI" id="CHEBI:15377"/>
        <dbReference type="ChEBI" id="CHEBI:16240"/>
        <dbReference type="ChEBI" id="CHEBI:57925"/>
        <dbReference type="ChEBI" id="CHEBI:58297"/>
        <dbReference type="EC" id="1.11.1.9"/>
    </reaction>
</comment>
<comment type="subunit">
    <text>Homotetramer.</text>
</comment>
<comment type="subcellular location">
    <subcellularLocation>
        <location>Secreted</location>
    </subcellularLocation>
</comment>
<comment type="tissue specificity">
    <text>Proximal caput epididymis.</text>
</comment>
<comment type="similarity">
    <text evidence="3">Belongs to the glutathione peroxidase family.</text>
</comment>
<sequence>MTVQLGAFYLFPLFMAGFVQTNSNLEKMDCYKDVTGTIYDYDAFTLNGNEHIQFKQYAGKHVLFVNVATYCGLTAQYPELNTLQEELKPFGLVVLGFPCNQFGKQEPGENSEILLGLKYVRPGGGYVPNFQLFEKGDVNGEKEQKVFTFLKHSCPHPSELIGSIGYISWEPIRVHDIRWNFEKFLVGPDGVPVMRWVHETPISTVKSDILAYLKQFKTE</sequence>
<organism>
    <name type="scientific">Sus scrofa</name>
    <name type="common">Pig</name>
    <dbReference type="NCBI Taxonomy" id="9823"/>
    <lineage>
        <taxon>Eukaryota</taxon>
        <taxon>Metazoa</taxon>
        <taxon>Chordata</taxon>
        <taxon>Craniata</taxon>
        <taxon>Vertebrata</taxon>
        <taxon>Euteleostomi</taxon>
        <taxon>Mammalia</taxon>
        <taxon>Eutheria</taxon>
        <taxon>Laurasiatheria</taxon>
        <taxon>Artiodactyla</taxon>
        <taxon>Suina</taxon>
        <taxon>Suidae</taxon>
        <taxon>Sus</taxon>
    </lineage>
</organism>
<keyword id="KW-0903">Direct protein sequencing</keyword>
<keyword id="KW-0560">Oxidoreductase</keyword>
<keyword id="KW-0575">Peroxidase</keyword>
<keyword id="KW-1185">Reference proteome</keyword>
<keyword id="KW-0964">Secreted</keyword>
<keyword id="KW-0732">Signal</keyword>
<gene>
    <name type="primary">GPX5</name>
</gene>
<proteinExistence type="evidence at protein level"/>
<feature type="signal peptide" evidence="2">
    <location>
        <begin position="1"/>
        <end position="21"/>
    </location>
</feature>
<feature type="chain" id="PRO_0000013079" description="Epididymal secretory glutathione peroxidase">
    <location>
        <begin position="22"/>
        <end position="219"/>
    </location>
</feature>
<feature type="active site" evidence="1">
    <location>
        <position position="71"/>
    </location>
</feature>
<evidence type="ECO:0000250" key="1"/>
<evidence type="ECO:0000269" key="2">
    <source>
    </source>
</evidence>
<evidence type="ECO:0000305" key="3"/>
<dbReference type="EC" id="1.11.1.9"/>
<dbReference type="EMBL" id="D37916">
    <property type="protein sequence ID" value="BAA22149.1"/>
    <property type="molecule type" value="mRNA"/>
</dbReference>
<dbReference type="RefSeq" id="NP_999051.1">
    <property type="nucleotide sequence ID" value="NM_213886.1"/>
</dbReference>
<dbReference type="SMR" id="O18994"/>
<dbReference type="FunCoup" id="O18994">
    <property type="interactions" value="237"/>
</dbReference>
<dbReference type="STRING" id="9823.ENSSSCP00000001283"/>
<dbReference type="PeroxiBase" id="3724">
    <property type="entry name" value="SscGPx05"/>
</dbReference>
<dbReference type="PaxDb" id="9823-ENSSSCP00000001283"/>
<dbReference type="PeptideAtlas" id="O18994"/>
<dbReference type="Ensembl" id="ENSSSCT00015072658.1">
    <property type="protein sequence ID" value="ENSSSCP00015029151.1"/>
    <property type="gene ID" value="ENSSSCG00015054484.1"/>
</dbReference>
<dbReference type="Ensembl" id="ENSSSCT00025101265.1">
    <property type="protein sequence ID" value="ENSSSCP00025044755.1"/>
    <property type="gene ID" value="ENSSSCG00025073518.1"/>
</dbReference>
<dbReference type="Ensembl" id="ENSSSCT00030036072.1">
    <property type="protein sequence ID" value="ENSSSCP00030016480.1"/>
    <property type="gene ID" value="ENSSSCG00030025829.1"/>
</dbReference>
<dbReference type="Ensembl" id="ENSSSCT00035038593.1">
    <property type="protein sequence ID" value="ENSSSCP00035015405.1"/>
    <property type="gene ID" value="ENSSSCG00035029146.1"/>
</dbReference>
<dbReference type="Ensembl" id="ENSSSCT00040007052.1">
    <property type="protein sequence ID" value="ENSSSCP00040002797.1"/>
    <property type="gene ID" value="ENSSSCG00040005331.1"/>
</dbReference>
<dbReference type="Ensembl" id="ENSSSCT00045012696.1">
    <property type="protein sequence ID" value="ENSSSCP00045008711.1"/>
    <property type="gene ID" value="ENSSSCG00045007605.1"/>
</dbReference>
<dbReference type="Ensembl" id="ENSSSCT00050042167.1">
    <property type="protein sequence ID" value="ENSSSCP00050017455.1"/>
    <property type="gene ID" value="ENSSSCG00050031364.1"/>
</dbReference>
<dbReference type="Ensembl" id="ENSSSCT00055012184.1">
    <property type="protein sequence ID" value="ENSSSCP00055009620.1"/>
    <property type="gene ID" value="ENSSSCG00055006273.1"/>
</dbReference>
<dbReference type="Ensembl" id="ENSSSCT00060040554.1">
    <property type="protein sequence ID" value="ENSSSCP00060017176.1"/>
    <property type="gene ID" value="ENSSSCG00060030030.1"/>
</dbReference>
<dbReference type="Ensembl" id="ENSSSCT00065028217.1">
    <property type="protein sequence ID" value="ENSSSCP00065011566.1"/>
    <property type="gene ID" value="ENSSSCG00065021191.1"/>
</dbReference>
<dbReference type="Ensembl" id="ENSSSCT00070049697.1">
    <property type="protein sequence ID" value="ENSSSCP00070041954.1"/>
    <property type="gene ID" value="ENSSSCG00070024870.1"/>
</dbReference>
<dbReference type="Ensembl" id="ENSSSCT00090028992">
    <property type="protein sequence ID" value="ENSSSCP00090017934"/>
    <property type="gene ID" value="ENSSSCG00090016444"/>
</dbReference>
<dbReference type="GeneID" id="396920"/>
<dbReference type="KEGG" id="ssc:396920"/>
<dbReference type="CTD" id="2880"/>
<dbReference type="eggNOG" id="KOG1651">
    <property type="taxonomic scope" value="Eukaryota"/>
</dbReference>
<dbReference type="HOGENOM" id="CLU_029507_2_1_1"/>
<dbReference type="InParanoid" id="O18994"/>
<dbReference type="OMA" id="SKHTFWE"/>
<dbReference type="OrthoDB" id="446890at2759"/>
<dbReference type="TreeFam" id="TF105318"/>
<dbReference type="Reactome" id="R-SSC-3299685">
    <property type="pathway name" value="Detoxification of Reactive Oxygen Species"/>
</dbReference>
<dbReference type="Proteomes" id="UP000008227">
    <property type="component" value="Unplaced"/>
</dbReference>
<dbReference type="Proteomes" id="UP000314985">
    <property type="component" value="Chromosome 7"/>
</dbReference>
<dbReference type="Proteomes" id="UP000694570">
    <property type="component" value="Unplaced"/>
</dbReference>
<dbReference type="Proteomes" id="UP000694571">
    <property type="component" value="Unplaced"/>
</dbReference>
<dbReference type="Proteomes" id="UP000694720">
    <property type="component" value="Unplaced"/>
</dbReference>
<dbReference type="Proteomes" id="UP000694722">
    <property type="component" value="Unplaced"/>
</dbReference>
<dbReference type="Proteomes" id="UP000694723">
    <property type="component" value="Unplaced"/>
</dbReference>
<dbReference type="Proteomes" id="UP000694724">
    <property type="component" value="Unplaced"/>
</dbReference>
<dbReference type="Proteomes" id="UP000694725">
    <property type="component" value="Unplaced"/>
</dbReference>
<dbReference type="Proteomes" id="UP000694726">
    <property type="component" value="Unplaced"/>
</dbReference>
<dbReference type="Proteomes" id="UP000694727">
    <property type="component" value="Unplaced"/>
</dbReference>
<dbReference type="Proteomes" id="UP000694728">
    <property type="component" value="Unplaced"/>
</dbReference>
<dbReference type="Bgee" id="ENSSSCG00000001214">
    <property type="expression patterns" value="Expressed in epididymis"/>
</dbReference>
<dbReference type="ExpressionAtlas" id="O18994">
    <property type="expression patterns" value="baseline"/>
</dbReference>
<dbReference type="GO" id="GO:0005576">
    <property type="term" value="C:extracellular region"/>
    <property type="evidence" value="ECO:0007669"/>
    <property type="project" value="UniProtKB-SubCell"/>
</dbReference>
<dbReference type="GO" id="GO:0004602">
    <property type="term" value="F:glutathione peroxidase activity"/>
    <property type="evidence" value="ECO:0000318"/>
    <property type="project" value="GO_Central"/>
</dbReference>
<dbReference type="GO" id="GO:0006979">
    <property type="term" value="P:response to oxidative stress"/>
    <property type="evidence" value="ECO:0007669"/>
    <property type="project" value="InterPro"/>
</dbReference>
<dbReference type="CDD" id="cd00340">
    <property type="entry name" value="GSH_Peroxidase"/>
    <property type="match status" value="1"/>
</dbReference>
<dbReference type="FunFam" id="3.40.30.10:FF:000112">
    <property type="entry name" value="Glutathione peroxidase"/>
    <property type="match status" value="1"/>
</dbReference>
<dbReference type="Gene3D" id="3.40.30.10">
    <property type="entry name" value="Glutaredoxin"/>
    <property type="match status" value="1"/>
</dbReference>
<dbReference type="InterPro" id="IPR000889">
    <property type="entry name" value="Glutathione_peroxidase"/>
</dbReference>
<dbReference type="InterPro" id="IPR029759">
    <property type="entry name" value="GPX_AS"/>
</dbReference>
<dbReference type="InterPro" id="IPR029760">
    <property type="entry name" value="GPX_CS"/>
</dbReference>
<dbReference type="InterPro" id="IPR036249">
    <property type="entry name" value="Thioredoxin-like_sf"/>
</dbReference>
<dbReference type="PANTHER" id="PTHR11592:SF127">
    <property type="entry name" value="EPIDIDYMAL SECRETORY GLUTATHIONE PEROXIDASE"/>
    <property type="match status" value="1"/>
</dbReference>
<dbReference type="PANTHER" id="PTHR11592">
    <property type="entry name" value="GLUTATHIONE PEROXIDASE"/>
    <property type="match status" value="1"/>
</dbReference>
<dbReference type="Pfam" id="PF00255">
    <property type="entry name" value="GSHPx"/>
    <property type="match status" value="1"/>
</dbReference>
<dbReference type="PIRSF" id="PIRSF000303">
    <property type="entry name" value="Glutathion_perox"/>
    <property type="match status" value="1"/>
</dbReference>
<dbReference type="PRINTS" id="PR01011">
    <property type="entry name" value="GLUTPROXDASE"/>
</dbReference>
<dbReference type="SUPFAM" id="SSF52833">
    <property type="entry name" value="Thioredoxin-like"/>
    <property type="match status" value="1"/>
</dbReference>
<dbReference type="PROSITE" id="PS00460">
    <property type="entry name" value="GLUTATHIONE_PEROXID_1"/>
    <property type="match status" value="1"/>
</dbReference>
<dbReference type="PROSITE" id="PS00763">
    <property type="entry name" value="GLUTATHIONE_PEROXID_2"/>
    <property type="match status" value="1"/>
</dbReference>
<dbReference type="PROSITE" id="PS51355">
    <property type="entry name" value="GLUTATHIONE_PEROXID_3"/>
    <property type="match status" value="1"/>
</dbReference>
<accession>O18994</accession>
<protein>
    <recommendedName>
        <fullName>Epididymal secretory glutathione peroxidase</fullName>
        <ecNumber>1.11.1.9</ecNumber>
    </recommendedName>
    <alternativeName>
        <fullName>Epididymis-specific glutathione peroxidase-like protein</fullName>
        <shortName>EGLP</shortName>
    </alternativeName>
    <alternativeName>
        <fullName>Glutathione peroxidase 5</fullName>
        <shortName>GPx-5</shortName>
        <shortName>GSHPx-5</shortName>
    </alternativeName>
</protein>
<reference key="1">
    <citation type="journal article" date="1997" name="Biochim. Biophys. Acta">
        <title>Molecular cloning and characterization of the epididymis-specific glutathione peroxidase-like protein secreted in the porcine epididymal fluid.</title>
        <authorList>
            <person name="Okamura N."/>
            <person name="Iwaki Y."/>
            <person name="Hiramoto S."/>
            <person name="Tamba M."/>
            <person name="Bannai S."/>
            <person name="Sugita Y."/>
            <person name="Syntin P."/>
            <person name="Dacheux F."/>
            <person name="Dacheux J.-L."/>
        </authorList>
    </citation>
    <scope>NUCLEOTIDE SEQUENCE [MRNA]</scope>
    <scope>PROTEIN SEQUENCE OF 22-46</scope>
    <scope>FUNCTION</scope>
    <source>
        <tissue>Epididymis</tissue>
    </source>
</reference>
<name>GPX5_PIG</name>